<keyword id="KW-0025">Alternative splicing</keyword>
<keyword id="KW-1003">Cell membrane</keyword>
<keyword id="KW-0175">Coiled coil</keyword>
<keyword id="KW-0472">Membrane</keyword>
<keyword id="KW-0597">Phosphoprotein</keyword>
<keyword id="KW-1185">Reference proteome</keyword>
<keyword id="KW-0732">Signal</keyword>
<keyword id="KW-0812">Transmembrane</keyword>
<keyword id="KW-1133">Transmembrane helix</keyword>
<name>RELL1_MOUSE</name>
<gene>
    <name type="primary">Rell1</name>
</gene>
<comment type="function">
    <text evidence="1">Induces activation of MAPK14/p38 cascade, when overexpressed. Induces apoptosis, when overexpressed.</text>
</comment>
<comment type="subunit">
    <text evidence="1">Interacts with RELT, RELL2, OXSR1 and PLSCR1.</text>
</comment>
<comment type="subcellular location">
    <subcellularLocation>
        <location evidence="1">Cell membrane</location>
        <topology evidence="1">Single-pass type I membrane protein</topology>
    </subcellularLocation>
</comment>
<comment type="alternative products">
    <event type="alternative splicing"/>
    <isoform>
        <id>Q8K2J7-1</id>
        <name>1</name>
        <sequence type="displayed"/>
    </isoform>
    <isoform>
        <id>Q8K2J7-2</id>
        <name>2</name>
        <sequence type="described" ref="VSP_032026"/>
    </isoform>
</comment>
<comment type="similarity">
    <text evidence="5">Belongs to the RELT family.</text>
</comment>
<reference key="1">
    <citation type="journal article" date="2005" name="Science">
        <title>The transcriptional landscape of the mammalian genome.</title>
        <authorList>
            <person name="Carninci P."/>
            <person name="Kasukawa T."/>
            <person name="Katayama S."/>
            <person name="Gough J."/>
            <person name="Frith M.C."/>
            <person name="Maeda N."/>
            <person name="Oyama R."/>
            <person name="Ravasi T."/>
            <person name="Lenhard B."/>
            <person name="Wells C."/>
            <person name="Kodzius R."/>
            <person name="Shimokawa K."/>
            <person name="Bajic V.B."/>
            <person name="Brenner S.E."/>
            <person name="Batalov S."/>
            <person name="Forrest A.R."/>
            <person name="Zavolan M."/>
            <person name="Davis M.J."/>
            <person name="Wilming L.G."/>
            <person name="Aidinis V."/>
            <person name="Allen J.E."/>
            <person name="Ambesi-Impiombato A."/>
            <person name="Apweiler R."/>
            <person name="Aturaliya R.N."/>
            <person name="Bailey T.L."/>
            <person name="Bansal M."/>
            <person name="Baxter L."/>
            <person name="Beisel K.W."/>
            <person name="Bersano T."/>
            <person name="Bono H."/>
            <person name="Chalk A.M."/>
            <person name="Chiu K.P."/>
            <person name="Choudhary V."/>
            <person name="Christoffels A."/>
            <person name="Clutterbuck D.R."/>
            <person name="Crowe M.L."/>
            <person name="Dalla E."/>
            <person name="Dalrymple B.P."/>
            <person name="de Bono B."/>
            <person name="Della Gatta G."/>
            <person name="di Bernardo D."/>
            <person name="Down T."/>
            <person name="Engstrom P."/>
            <person name="Fagiolini M."/>
            <person name="Faulkner G."/>
            <person name="Fletcher C.F."/>
            <person name="Fukushima T."/>
            <person name="Furuno M."/>
            <person name="Futaki S."/>
            <person name="Gariboldi M."/>
            <person name="Georgii-Hemming P."/>
            <person name="Gingeras T.R."/>
            <person name="Gojobori T."/>
            <person name="Green R.E."/>
            <person name="Gustincich S."/>
            <person name="Harbers M."/>
            <person name="Hayashi Y."/>
            <person name="Hensch T.K."/>
            <person name="Hirokawa N."/>
            <person name="Hill D."/>
            <person name="Huminiecki L."/>
            <person name="Iacono M."/>
            <person name="Ikeo K."/>
            <person name="Iwama A."/>
            <person name="Ishikawa T."/>
            <person name="Jakt M."/>
            <person name="Kanapin A."/>
            <person name="Katoh M."/>
            <person name="Kawasawa Y."/>
            <person name="Kelso J."/>
            <person name="Kitamura H."/>
            <person name="Kitano H."/>
            <person name="Kollias G."/>
            <person name="Krishnan S.P."/>
            <person name="Kruger A."/>
            <person name="Kummerfeld S.K."/>
            <person name="Kurochkin I.V."/>
            <person name="Lareau L.F."/>
            <person name="Lazarevic D."/>
            <person name="Lipovich L."/>
            <person name="Liu J."/>
            <person name="Liuni S."/>
            <person name="McWilliam S."/>
            <person name="Madan Babu M."/>
            <person name="Madera M."/>
            <person name="Marchionni L."/>
            <person name="Matsuda H."/>
            <person name="Matsuzawa S."/>
            <person name="Miki H."/>
            <person name="Mignone F."/>
            <person name="Miyake S."/>
            <person name="Morris K."/>
            <person name="Mottagui-Tabar S."/>
            <person name="Mulder N."/>
            <person name="Nakano N."/>
            <person name="Nakauchi H."/>
            <person name="Ng P."/>
            <person name="Nilsson R."/>
            <person name="Nishiguchi S."/>
            <person name="Nishikawa S."/>
            <person name="Nori F."/>
            <person name="Ohara O."/>
            <person name="Okazaki Y."/>
            <person name="Orlando V."/>
            <person name="Pang K.C."/>
            <person name="Pavan W.J."/>
            <person name="Pavesi G."/>
            <person name="Pesole G."/>
            <person name="Petrovsky N."/>
            <person name="Piazza S."/>
            <person name="Reed J."/>
            <person name="Reid J.F."/>
            <person name="Ring B.Z."/>
            <person name="Ringwald M."/>
            <person name="Rost B."/>
            <person name="Ruan Y."/>
            <person name="Salzberg S.L."/>
            <person name="Sandelin A."/>
            <person name="Schneider C."/>
            <person name="Schoenbach C."/>
            <person name="Sekiguchi K."/>
            <person name="Semple C.A."/>
            <person name="Seno S."/>
            <person name="Sessa L."/>
            <person name="Sheng Y."/>
            <person name="Shibata Y."/>
            <person name="Shimada H."/>
            <person name="Shimada K."/>
            <person name="Silva D."/>
            <person name="Sinclair B."/>
            <person name="Sperling S."/>
            <person name="Stupka E."/>
            <person name="Sugiura K."/>
            <person name="Sultana R."/>
            <person name="Takenaka Y."/>
            <person name="Taki K."/>
            <person name="Tammoja K."/>
            <person name="Tan S.L."/>
            <person name="Tang S."/>
            <person name="Taylor M.S."/>
            <person name="Tegner J."/>
            <person name="Teichmann S.A."/>
            <person name="Ueda H.R."/>
            <person name="van Nimwegen E."/>
            <person name="Verardo R."/>
            <person name="Wei C.L."/>
            <person name="Yagi K."/>
            <person name="Yamanishi H."/>
            <person name="Zabarovsky E."/>
            <person name="Zhu S."/>
            <person name="Zimmer A."/>
            <person name="Hide W."/>
            <person name="Bult C."/>
            <person name="Grimmond S.M."/>
            <person name="Teasdale R.D."/>
            <person name="Liu E.T."/>
            <person name="Brusic V."/>
            <person name="Quackenbush J."/>
            <person name="Wahlestedt C."/>
            <person name="Mattick J.S."/>
            <person name="Hume D.A."/>
            <person name="Kai C."/>
            <person name="Sasaki D."/>
            <person name="Tomaru Y."/>
            <person name="Fukuda S."/>
            <person name="Kanamori-Katayama M."/>
            <person name="Suzuki M."/>
            <person name="Aoki J."/>
            <person name="Arakawa T."/>
            <person name="Iida J."/>
            <person name="Imamura K."/>
            <person name="Itoh M."/>
            <person name="Kato T."/>
            <person name="Kawaji H."/>
            <person name="Kawagashira N."/>
            <person name="Kawashima T."/>
            <person name="Kojima M."/>
            <person name="Kondo S."/>
            <person name="Konno H."/>
            <person name="Nakano K."/>
            <person name="Ninomiya N."/>
            <person name="Nishio T."/>
            <person name="Okada M."/>
            <person name="Plessy C."/>
            <person name="Shibata K."/>
            <person name="Shiraki T."/>
            <person name="Suzuki S."/>
            <person name="Tagami M."/>
            <person name="Waki K."/>
            <person name="Watahiki A."/>
            <person name="Okamura-Oho Y."/>
            <person name="Suzuki H."/>
            <person name="Kawai J."/>
            <person name="Hayashizaki Y."/>
        </authorList>
    </citation>
    <scope>NUCLEOTIDE SEQUENCE [LARGE SCALE MRNA] (ISOFORMS 1 AND 2)</scope>
    <source>
        <strain>C57BL/6J</strain>
        <tissue>Corpora quadrigemina</tissue>
        <tissue>Skin</tissue>
    </source>
</reference>
<reference key="2">
    <citation type="journal article" date="2004" name="Genome Res.">
        <title>The status, quality, and expansion of the NIH full-length cDNA project: the Mammalian Gene Collection (MGC).</title>
        <authorList>
            <consortium name="The MGC Project Team"/>
        </authorList>
    </citation>
    <scope>NUCLEOTIDE SEQUENCE [LARGE SCALE MRNA] (ISOFORM 1)</scope>
    <source>
        <strain>C57BL/6J</strain>
        <strain>Czech II</strain>
        <strain>FVB/N-3</strain>
        <tissue>Mammary tumor</tissue>
    </source>
</reference>
<sequence length="272" mass="29351">MALWGLPGSAVLAASVFVGGAVSSPLVAADNTGSHTLHSRAETTPSSPTNNPGNGHPEYIAYVLVPVFFVMGLLGVLICHLLKKKGYRCTTEAEQEVEEEKVEKIELNDSINENSDTVGQIVQYIMKNEANADILKAMVADNSVGDIESPVTPSTPGSPPVSPGPLSPGATPGKHVCGHHLHTVGGVVERDVCQRCRHKRWHFIKPTNKTKEGRPRRQGEVTVLSVGRFRVTKVEHKSNQKERRSLMSVSGIESVNGDVPATPVKRERSDTE</sequence>
<protein>
    <recommendedName>
        <fullName>RELT-like protein 1</fullName>
    </recommendedName>
</protein>
<accession>Q8K2J7</accession>
<accession>Q3TVW8</accession>
<accession>Q3UZH6</accession>
<accession>Q8R3S5</accession>
<dbReference type="EMBL" id="AK133845">
    <property type="protein sequence ID" value="BAE21881.1"/>
    <property type="molecule type" value="mRNA"/>
</dbReference>
<dbReference type="EMBL" id="AK140108">
    <property type="protein sequence ID" value="BAE24240.1"/>
    <property type="molecule type" value="mRNA"/>
</dbReference>
<dbReference type="EMBL" id="AK159944">
    <property type="protein sequence ID" value="BAE35500.1"/>
    <property type="molecule type" value="mRNA"/>
</dbReference>
<dbReference type="EMBL" id="AK161061">
    <property type="protein sequence ID" value="BAE36178.1"/>
    <property type="molecule type" value="mRNA"/>
</dbReference>
<dbReference type="EMBL" id="BC024679">
    <property type="protein sequence ID" value="AAH24679.1"/>
    <property type="molecule type" value="mRNA"/>
</dbReference>
<dbReference type="EMBL" id="BC031198">
    <property type="protein sequence ID" value="AAH31198.2"/>
    <property type="molecule type" value="mRNA"/>
</dbReference>
<dbReference type="EMBL" id="BC066137">
    <property type="protein sequence ID" value="AAH66137.2"/>
    <property type="molecule type" value="mRNA"/>
</dbReference>
<dbReference type="EMBL" id="BC066160">
    <property type="protein sequence ID" value="AAH66160.2"/>
    <property type="molecule type" value="mRNA"/>
</dbReference>
<dbReference type="CCDS" id="CCDS39093.1">
    <molecule id="Q8K2J7-1"/>
</dbReference>
<dbReference type="RefSeq" id="NP_001404878.1">
    <molecule id="Q8K2J7-1"/>
    <property type="nucleotide sequence ID" value="NM_001417949.1"/>
</dbReference>
<dbReference type="RefSeq" id="NP_001404879.1">
    <molecule id="Q8K2J7-1"/>
    <property type="nucleotide sequence ID" value="NM_001417950.1"/>
</dbReference>
<dbReference type="RefSeq" id="NP_001404880.1">
    <molecule id="Q8K2J7-2"/>
    <property type="nucleotide sequence ID" value="NM_001417951.1"/>
</dbReference>
<dbReference type="RefSeq" id="NP_666035.2">
    <molecule id="Q8K2J7-1"/>
    <property type="nucleotide sequence ID" value="NM_145923.5"/>
</dbReference>
<dbReference type="RefSeq" id="XP_006503684.1">
    <property type="nucleotide sequence ID" value="XM_006503621.3"/>
</dbReference>
<dbReference type="SMR" id="Q8K2J7"/>
<dbReference type="FunCoup" id="Q8K2J7">
    <property type="interactions" value="655"/>
</dbReference>
<dbReference type="STRING" id="10090.ENSMUSP00000118125"/>
<dbReference type="GlyGen" id="Q8K2J7">
    <property type="glycosylation" value="3 sites"/>
</dbReference>
<dbReference type="iPTMnet" id="Q8K2J7"/>
<dbReference type="PhosphoSitePlus" id="Q8K2J7"/>
<dbReference type="SwissPalm" id="Q8K2J7"/>
<dbReference type="jPOST" id="Q8K2J7"/>
<dbReference type="PaxDb" id="10090-ENSMUSP00000118125"/>
<dbReference type="PeptideAtlas" id="Q8K2J7"/>
<dbReference type="ProteomicsDB" id="253110">
    <molecule id="Q8K2J7-1"/>
</dbReference>
<dbReference type="ProteomicsDB" id="253111">
    <molecule id="Q8K2J7-2"/>
</dbReference>
<dbReference type="Pumba" id="Q8K2J7"/>
<dbReference type="Antibodypedia" id="2874">
    <property type="antibodies" value="12 antibodies from 7 providers"/>
</dbReference>
<dbReference type="DNASU" id="100532"/>
<dbReference type="Ensembl" id="ENSMUST00000154169.4">
    <molecule id="Q8K2J7-1"/>
    <property type="protein sequence ID" value="ENSMUSP00000118125.2"/>
    <property type="gene ID" value="ENSMUSG00000047881.15"/>
</dbReference>
<dbReference type="GeneID" id="100532"/>
<dbReference type="KEGG" id="mmu:100532"/>
<dbReference type="UCSC" id="uc008xmh.1">
    <molecule id="Q8K2J7-1"/>
    <property type="organism name" value="mouse"/>
</dbReference>
<dbReference type="AGR" id="MGI:2140767"/>
<dbReference type="CTD" id="768211"/>
<dbReference type="MGI" id="MGI:2140767">
    <property type="gene designation" value="Rell1"/>
</dbReference>
<dbReference type="VEuPathDB" id="HostDB:ENSMUSG00000047881"/>
<dbReference type="eggNOG" id="ENOG502R0TD">
    <property type="taxonomic scope" value="Eukaryota"/>
</dbReference>
<dbReference type="GeneTree" id="ENSGT00940000159709"/>
<dbReference type="HOGENOM" id="CLU_084225_0_0_1"/>
<dbReference type="InParanoid" id="Q8K2J7"/>
<dbReference type="OMA" id="NICTRCS"/>
<dbReference type="OrthoDB" id="9353106at2759"/>
<dbReference type="PhylomeDB" id="Q8K2J7"/>
<dbReference type="TreeFam" id="TF332339"/>
<dbReference type="BioGRID-ORCS" id="100532">
    <property type="hits" value="1 hit in 80 CRISPR screens"/>
</dbReference>
<dbReference type="ChiTaRS" id="Rell1">
    <property type="organism name" value="mouse"/>
</dbReference>
<dbReference type="PRO" id="PR:Q8K2J7"/>
<dbReference type="Proteomes" id="UP000000589">
    <property type="component" value="Chromosome 5"/>
</dbReference>
<dbReference type="RNAct" id="Q8K2J7">
    <property type="molecule type" value="protein"/>
</dbReference>
<dbReference type="Bgee" id="ENSMUSG00000047881">
    <property type="expression patterns" value="Expressed in parotid gland and 251 other cell types or tissues"/>
</dbReference>
<dbReference type="ExpressionAtlas" id="Q8K2J7">
    <property type="expression patterns" value="baseline and differential"/>
</dbReference>
<dbReference type="GO" id="GO:0015630">
    <property type="term" value="C:microtubule cytoskeleton"/>
    <property type="evidence" value="ECO:0007669"/>
    <property type="project" value="Ensembl"/>
</dbReference>
<dbReference type="GO" id="GO:0005886">
    <property type="term" value="C:plasma membrane"/>
    <property type="evidence" value="ECO:0007669"/>
    <property type="project" value="UniProtKB-SubCell"/>
</dbReference>
<dbReference type="GO" id="GO:1900745">
    <property type="term" value="P:positive regulation of p38MAPK cascade"/>
    <property type="evidence" value="ECO:0000250"/>
    <property type="project" value="UniProtKB"/>
</dbReference>
<dbReference type="InterPro" id="IPR042315">
    <property type="entry name" value="RELL1"/>
</dbReference>
<dbReference type="InterPro" id="IPR022248">
    <property type="entry name" value="TNF_rcpt_RELT"/>
</dbReference>
<dbReference type="PANTHER" id="PTHR31037:SF1">
    <property type="entry name" value="RELT-LIKE PROTEIN 1"/>
    <property type="match status" value="1"/>
</dbReference>
<dbReference type="PANTHER" id="PTHR31037">
    <property type="entry name" value="RELT-LIKE PROTEIN 1-RELATED"/>
    <property type="match status" value="1"/>
</dbReference>
<dbReference type="Pfam" id="PF12606">
    <property type="entry name" value="RELT"/>
    <property type="match status" value="1"/>
</dbReference>
<feature type="signal peptide" evidence="2">
    <location>
        <begin position="1"/>
        <end position="23"/>
    </location>
</feature>
<feature type="chain" id="PRO_0000323591" description="RELT-like protein 1">
    <location>
        <begin position="24"/>
        <end position="272"/>
    </location>
</feature>
<feature type="topological domain" description="Extracellular" evidence="2">
    <location>
        <begin position="24"/>
        <end position="58"/>
    </location>
</feature>
<feature type="transmembrane region" description="Helical" evidence="2">
    <location>
        <begin position="59"/>
        <end position="79"/>
    </location>
</feature>
<feature type="topological domain" description="Cytoplasmic" evidence="2">
    <location>
        <begin position="80"/>
        <end position="272"/>
    </location>
</feature>
<feature type="region of interest" description="Disordered" evidence="3">
    <location>
        <begin position="33"/>
        <end position="52"/>
    </location>
</feature>
<feature type="region of interest" description="Disordered" evidence="3">
    <location>
        <begin position="146"/>
        <end position="171"/>
    </location>
</feature>
<feature type="region of interest" description="Disordered" evidence="3">
    <location>
        <begin position="235"/>
        <end position="272"/>
    </location>
</feature>
<feature type="coiled-coil region" evidence="2">
    <location>
        <begin position="90"/>
        <end position="114"/>
    </location>
</feature>
<feature type="compositionally biased region" description="Pro residues" evidence="3">
    <location>
        <begin position="156"/>
        <end position="166"/>
    </location>
</feature>
<feature type="compositionally biased region" description="Basic and acidic residues" evidence="3">
    <location>
        <begin position="235"/>
        <end position="245"/>
    </location>
</feature>
<feature type="modified residue" description="Phosphoserine" evidence="1">
    <location>
        <position position="110"/>
    </location>
</feature>
<feature type="modified residue" description="Phosphoserine" evidence="1">
    <location>
        <position position="115"/>
    </location>
</feature>
<feature type="modified residue" description="Phosphoserine" evidence="1">
    <location>
        <position position="245"/>
    </location>
</feature>
<feature type="modified residue" description="Phosphoserine" evidence="1">
    <location>
        <position position="248"/>
    </location>
</feature>
<feature type="splice variant" id="VSP_032026" description="In isoform 2." evidence="4">
    <location>
        <begin position="1"/>
        <end position="70"/>
    </location>
</feature>
<proteinExistence type="evidence at transcript level"/>
<organism>
    <name type="scientific">Mus musculus</name>
    <name type="common">Mouse</name>
    <dbReference type="NCBI Taxonomy" id="10090"/>
    <lineage>
        <taxon>Eukaryota</taxon>
        <taxon>Metazoa</taxon>
        <taxon>Chordata</taxon>
        <taxon>Craniata</taxon>
        <taxon>Vertebrata</taxon>
        <taxon>Euteleostomi</taxon>
        <taxon>Mammalia</taxon>
        <taxon>Eutheria</taxon>
        <taxon>Euarchontoglires</taxon>
        <taxon>Glires</taxon>
        <taxon>Rodentia</taxon>
        <taxon>Myomorpha</taxon>
        <taxon>Muroidea</taxon>
        <taxon>Muridae</taxon>
        <taxon>Murinae</taxon>
        <taxon>Mus</taxon>
        <taxon>Mus</taxon>
    </lineage>
</organism>
<evidence type="ECO:0000250" key="1">
    <source>
        <dbReference type="UniProtKB" id="Q8IUW5"/>
    </source>
</evidence>
<evidence type="ECO:0000255" key="2"/>
<evidence type="ECO:0000256" key="3">
    <source>
        <dbReference type="SAM" id="MobiDB-lite"/>
    </source>
</evidence>
<evidence type="ECO:0000303" key="4">
    <source>
    </source>
</evidence>
<evidence type="ECO:0000305" key="5"/>